<organism>
    <name type="scientific">Synechococcus sp. (strain CC9311)</name>
    <dbReference type="NCBI Taxonomy" id="64471"/>
    <lineage>
        <taxon>Bacteria</taxon>
        <taxon>Bacillati</taxon>
        <taxon>Cyanobacteriota</taxon>
        <taxon>Cyanophyceae</taxon>
        <taxon>Synechococcales</taxon>
        <taxon>Synechococcaceae</taxon>
        <taxon>Synechococcus</taxon>
    </lineage>
</organism>
<evidence type="ECO:0000255" key="1">
    <source>
        <dbReference type="HAMAP-Rule" id="MF_01820"/>
    </source>
</evidence>
<evidence type="ECO:0000255" key="2">
    <source>
        <dbReference type="PROSITE-ProRule" id="PRU01058"/>
    </source>
</evidence>
<reference key="1">
    <citation type="journal article" date="2006" name="Proc. Natl. Acad. Sci. U.S.A.">
        <title>Genome sequence of Synechococcus CC9311: insights into adaptation to a coastal environment.</title>
        <authorList>
            <person name="Palenik B."/>
            <person name="Ren Q."/>
            <person name="Dupont C.L."/>
            <person name="Myers G.S."/>
            <person name="Heidelberg J.F."/>
            <person name="Badger J.H."/>
            <person name="Madupu R."/>
            <person name="Nelson W.C."/>
            <person name="Brinkac L.M."/>
            <person name="Dodson R.J."/>
            <person name="Durkin A.S."/>
            <person name="Daugherty S.C."/>
            <person name="Sullivan S.A."/>
            <person name="Khouri H."/>
            <person name="Mohamoud Y."/>
            <person name="Halpin R."/>
            <person name="Paulsen I.T."/>
        </authorList>
    </citation>
    <scope>NUCLEOTIDE SEQUENCE [LARGE SCALE GENOMIC DNA]</scope>
    <source>
        <strain>CC9311</strain>
    </source>
</reference>
<comment type="function">
    <text evidence="1">One of several proteins that assist in the late maturation steps of the functional core of the 30S ribosomal subunit. Helps release RbfA from mature subunits. May play a role in the assembly of ribosomal proteins into the subunit. Circularly permuted GTPase that catalyzes slow GTP hydrolysis, GTPase activity is stimulated by the 30S ribosomal subunit.</text>
</comment>
<comment type="cofactor">
    <cofactor evidence="1">
        <name>Zn(2+)</name>
        <dbReference type="ChEBI" id="CHEBI:29105"/>
    </cofactor>
    <text evidence="1">Binds 1 zinc ion per subunit.</text>
</comment>
<comment type="subunit">
    <text evidence="1">Monomer. Associates with 30S ribosomal subunit, binds 16S rRNA.</text>
</comment>
<comment type="subcellular location">
    <subcellularLocation>
        <location evidence="1">Cytoplasm</location>
    </subcellularLocation>
</comment>
<comment type="similarity">
    <text evidence="1">Belongs to the TRAFAC class YlqF/YawG GTPase family. RsgA subfamily.</text>
</comment>
<protein>
    <recommendedName>
        <fullName evidence="1">Small ribosomal subunit biogenesis GTPase RsgA</fullName>
        <ecNumber evidence="1">3.6.1.-</ecNumber>
    </recommendedName>
</protein>
<keyword id="KW-0963">Cytoplasm</keyword>
<keyword id="KW-0342">GTP-binding</keyword>
<keyword id="KW-0378">Hydrolase</keyword>
<keyword id="KW-0479">Metal-binding</keyword>
<keyword id="KW-0547">Nucleotide-binding</keyword>
<keyword id="KW-1185">Reference proteome</keyword>
<keyword id="KW-0690">Ribosome biogenesis</keyword>
<keyword id="KW-0694">RNA-binding</keyword>
<keyword id="KW-0699">rRNA-binding</keyword>
<keyword id="KW-0862">Zinc</keyword>
<name>RSGA_SYNS3</name>
<feature type="chain" id="PRO_1000188144" description="Small ribosomal subunit biogenesis GTPase RsgA">
    <location>
        <begin position="1"/>
        <end position="304"/>
    </location>
</feature>
<feature type="domain" description="CP-type G" evidence="2">
    <location>
        <begin position="78"/>
        <end position="237"/>
    </location>
</feature>
<feature type="binding site" evidence="1">
    <location>
        <begin position="127"/>
        <end position="130"/>
    </location>
    <ligand>
        <name>GTP</name>
        <dbReference type="ChEBI" id="CHEBI:37565"/>
    </ligand>
</feature>
<feature type="binding site" evidence="1">
    <location>
        <begin position="179"/>
        <end position="187"/>
    </location>
    <ligand>
        <name>GTP</name>
        <dbReference type="ChEBI" id="CHEBI:37565"/>
    </ligand>
</feature>
<feature type="binding site" evidence="1">
    <location>
        <position position="262"/>
    </location>
    <ligand>
        <name>Zn(2+)</name>
        <dbReference type="ChEBI" id="CHEBI:29105"/>
    </ligand>
</feature>
<feature type="binding site" evidence="1">
    <location>
        <position position="267"/>
    </location>
    <ligand>
        <name>Zn(2+)</name>
        <dbReference type="ChEBI" id="CHEBI:29105"/>
    </ligand>
</feature>
<feature type="binding site" evidence="1">
    <location>
        <position position="269"/>
    </location>
    <ligand>
        <name>Zn(2+)</name>
        <dbReference type="ChEBI" id="CHEBI:29105"/>
    </ligand>
</feature>
<feature type="binding site" evidence="1">
    <location>
        <position position="275"/>
    </location>
    <ligand>
        <name>Zn(2+)</name>
        <dbReference type="ChEBI" id="CHEBI:29105"/>
    </ligand>
</feature>
<dbReference type="EC" id="3.6.1.-" evidence="1"/>
<dbReference type="EMBL" id="CP000435">
    <property type="protein sequence ID" value="ABI47470.1"/>
    <property type="molecule type" value="Genomic_DNA"/>
</dbReference>
<dbReference type="RefSeq" id="WP_011618016.1">
    <property type="nucleotide sequence ID" value="NC_008319.1"/>
</dbReference>
<dbReference type="SMR" id="Q0IE58"/>
<dbReference type="STRING" id="64471.sync_0025"/>
<dbReference type="KEGG" id="syg:sync_0025"/>
<dbReference type="eggNOG" id="COG1162">
    <property type="taxonomic scope" value="Bacteria"/>
</dbReference>
<dbReference type="HOGENOM" id="CLU_033617_2_1_3"/>
<dbReference type="Proteomes" id="UP000001961">
    <property type="component" value="Chromosome"/>
</dbReference>
<dbReference type="GO" id="GO:0005737">
    <property type="term" value="C:cytoplasm"/>
    <property type="evidence" value="ECO:0007669"/>
    <property type="project" value="UniProtKB-SubCell"/>
</dbReference>
<dbReference type="GO" id="GO:0005525">
    <property type="term" value="F:GTP binding"/>
    <property type="evidence" value="ECO:0007669"/>
    <property type="project" value="UniProtKB-UniRule"/>
</dbReference>
<dbReference type="GO" id="GO:0003924">
    <property type="term" value="F:GTPase activity"/>
    <property type="evidence" value="ECO:0007669"/>
    <property type="project" value="UniProtKB-UniRule"/>
</dbReference>
<dbReference type="GO" id="GO:0046872">
    <property type="term" value="F:metal ion binding"/>
    <property type="evidence" value="ECO:0007669"/>
    <property type="project" value="UniProtKB-KW"/>
</dbReference>
<dbReference type="GO" id="GO:0019843">
    <property type="term" value="F:rRNA binding"/>
    <property type="evidence" value="ECO:0007669"/>
    <property type="project" value="UniProtKB-KW"/>
</dbReference>
<dbReference type="GO" id="GO:0042274">
    <property type="term" value="P:ribosomal small subunit biogenesis"/>
    <property type="evidence" value="ECO:0007669"/>
    <property type="project" value="UniProtKB-UniRule"/>
</dbReference>
<dbReference type="CDD" id="cd01854">
    <property type="entry name" value="YjeQ_EngC"/>
    <property type="match status" value="1"/>
</dbReference>
<dbReference type="Gene3D" id="2.40.50.140">
    <property type="entry name" value="Nucleic acid-binding proteins"/>
    <property type="match status" value="1"/>
</dbReference>
<dbReference type="Gene3D" id="3.40.50.300">
    <property type="entry name" value="P-loop containing nucleotide triphosphate hydrolases"/>
    <property type="match status" value="1"/>
</dbReference>
<dbReference type="Gene3D" id="1.10.40.50">
    <property type="entry name" value="Probable gtpase engc, domain 3"/>
    <property type="match status" value="1"/>
</dbReference>
<dbReference type="HAMAP" id="MF_01820">
    <property type="entry name" value="GTPase_RsgA"/>
    <property type="match status" value="1"/>
</dbReference>
<dbReference type="InterPro" id="IPR030378">
    <property type="entry name" value="G_CP_dom"/>
</dbReference>
<dbReference type="InterPro" id="IPR012340">
    <property type="entry name" value="NA-bd_OB-fold"/>
</dbReference>
<dbReference type="InterPro" id="IPR027417">
    <property type="entry name" value="P-loop_NTPase"/>
</dbReference>
<dbReference type="InterPro" id="IPR004881">
    <property type="entry name" value="Ribosome_biogen_GTPase_RsgA"/>
</dbReference>
<dbReference type="InterPro" id="IPR010914">
    <property type="entry name" value="RsgA_GTPase_dom"/>
</dbReference>
<dbReference type="NCBIfam" id="TIGR00157">
    <property type="entry name" value="ribosome small subunit-dependent GTPase A"/>
    <property type="match status" value="1"/>
</dbReference>
<dbReference type="PANTHER" id="PTHR32120">
    <property type="entry name" value="SMALL RIBOSOMAL SUBUNIT BIOGENESIS GTPASE RSGA"/>
    <property type="match status" value="1"/>
</dbReference>
<dbReference type="PANTHER" id="PTHR32120:SF11">
    <property type="entry name" value="SMALL RIBOSOMAL SUBUNIT BIOGENESIS GTPASE RSGA 1, MITOCHONDRIAL-RELATED"/>
    <property type="match status" value="1"/>
</dbReference>
<dbReference type="Pfam" id="PF03193">
    <property type="entry name" value="RsgA_GTPase"/>
    <property type="match status" value="1"/>
</dbReference>
<dbReference type="SUPFAM" id="SSF50249">
    <property type="entry name" value="Nucleic acid-binding proteins"/>
    <property type="match status" value="1"/>
</dbReference>
<dbReference type="SUPFAM" id="SSF52540">
    <property type="entry name" value="P-loop containing nucleoside triphosphate hydrolases"/>
    <property type="match status" value="1"/>
</dbReference>
<dbReference type="PROSITE" id="PS50936">
    <property type="entry name" value="ENGC_GTPASE"/>
    <property type="match status" value="1"/>
</dbReference>
<dbReference type="PROSITE" id="PS51721">
    <property type="entry name" value="G_CP"/>
    <property type="match status" value="1"/>
</dbReference>
<gene>
    <name evidence="1" type="primary">rsgA</name>
    <name type="ordered locus">sync_0025</name>
</gene>
<accession>Q0IE58</accession>
<sequence>MVVLDQPAQSGMVVALQANYLEVELDQVSELIPSRLLCTRRTRLSHRGEAVYVGDRVRVEAIDVSHARAVVADVEPRVSFLTRPPVANASTVVVALAVDQPAFDPDQASRFLLTAERTSLAVQLVLTKTDLLEPEALERLRVRLQAWGYPPLLVSTFSGLGLSELKQRLAESSLSVLCGPSGVGKSSLLNALIPELDLRIGSVSGRLQRGRHTTRHVELHHLGAKARVADTPGFNRPDLPDDPRNLEVLFPELRVQLEQHPCRFRDCLHRDEPGCGVTRDWERYPIYRRAVEDLLGLSRPSRGG</sequence>
<proteinExistence type="inferred from homology"/>